<organism>
    <name type="scientific">Syntrophotalea carbinolica (strain DSM 2380 / NBRC 103641 / GraBd1)</name>
    <name type="common">Pelobacter carbinolicus</name>
    <dbReference type="NCBI Taxonomy" id="338963"/>
    <lineage>
        <taxon>Bacteria</taxon>
        <taxon>Pseudomonadati</taxon>
        <taxon>Thermodesulfobacteriota</taxon>
        <taxon>Desulfuromonadia</taxon>
        <taxon>Desulfuromonadales</taxon>
        <taxon>Syntrophotaleaceae</taxon>
        <taxon>Syntrophotalea</taxon>
    </lineage>
</organism>
<protein>
    <recommendedName>
        <fullName>Acylphosphatase</fullName>
        <ecNumber>3.6.1.7</ecNumber>
    </recommendedName>
    <alternativeName>
        <fullName>Acylphosphate phosphohydrolase</fullName>
    </alternativeName>
</protein>
<feature type="chain" id="PRO_0000326765" description="Acylphosphatase">
    <location>
        <begin position="1"/>
        <end position="92"/>
    </location>
</feature>
<feature type="domain" description="Acylphosphatase-like" evidence="1">
    <location>
        <begin position="5"/>
        <end position="92"/>
    </location>
</feature>
<feature type="active site" evidence="1">
    <location>
        <position position="20"/>
    </location>
</feature>
<feature type="active site" evidence="1">
    <location>
        <position position="38"/>
    </location>
</feature>
<evidence type="ECO:0000255" key="1">
    <source>
        <dbReference type="PROSITE-ProRule" id="PRU00520"/>
    </source>
</evidence>
<evidence type="ECO:0000305" key="2"/>
<keyword id="KW-0378">Hydrolase</keyword>
<keyword id="KW-1185">Reference proteome</keyword>
<accession>Q3A2F4</accession>
<reference key="1">
    <citation type="submission" date="2005-10" db="EMBL/GenBank/DDBJ databases">
        <title>Complete sequence of Pelobacter carbinolicus DSM 2380.</title>
        <authorList>
            <person name="Copeland A."/>
            <person name="Lucas S."/>
            <person name="Lapidus A."/>
            <person name="Barry K."/>
            <person name="Detter J.C."/>
            <person name="Glavina T."/>
            <person name="Hammon N."/>
            <person name="Israni S."/>
            <person name="Pitluck S."/>
            <person name="Chertkov O."/>
            <person name="Schmutz J."/>
            <person name="Larimer F."/>
            <person name="Land M."/>
            <person name="Kyrpides N."/>
            <person name="Ivanova N."/>
            <person name="Richardson P."/>
        </authorList>
    </citation>
    <scope>NUCLEOTIDE SEQUENCE [LARGE SCALE GENOMIC DNA]</scope>
    <source>
        <strain>DSM 2380 / NBRC 103641 / GraBd1</strain>
    </source>
</reference>
<gene>
    <name type="primary">acyP</name>
    <name type="ordered locus">Pcar_2214</name>
</gene>
<name>ACYP_SYNC1</name>
<proteinExistence type="inferred from homology"/>
<sequence length="92" mass="10353">MKPIRVKVKVNGRVQGVGFRHFTYKTAISLELTGWVRNLEDGCVEAVAEGPRQQVEEWLAALKKGPPASKVAGLTIQREIVEGVFERFEVRF</sequence>
<dbReference type="EC" id="3.6.1.7"/>
<dbReference type="EMBL" id="CP000142">
    <property type="protein sequence ID" value="ABA89453.1"/>
    <property type="molecule type" value="Genomic_DNA"/>
</dbReference>
<dbReference type="RefSeq" id="WP_011341968.1">
    <property type="nucleotide sequence ID" value="NC_007498.2"/>
</dbReference>
<dbReference type="SMR" id="Q3A2F4"/>
<dbReference type="STRING" id="338963.Pcar_2214"/>
<dbReference type="KEGG" id="pca:Pcar_2214"/>
<dbReference type="eggNOG" id="COG1254">
    <property type="taxonomic scope" value="Bacteria"/>
</dbReference>
<dbReference type="HOGENOM" id="CLU_141932_2_1_7"/>
<dbReference type="OrthoDB" id="9808093at2"/>
<dbReference type="Proteomes" id="UP000002534">
    <property type="component" value="Chromosome"/>
</dbReference>
<dbReference type="GO" id="GO:0003998">
    <property type="term" value="F:acylphosphatase activity"/>
    <property type="evidence" value="ECO:0007669"/>
    <property type="project" value="UniProtKB-EC"/>
</dbReference>
<dbReference type="Gene3D" id="3.30.70.100">
    <property type="match status" value="1"/>
</dbReference>
<dbReference type="InterPro" id="IPR020456">
    <property type="entry name" value="Acylphosphatase"/>
</dbReference>
<dbReference type="InterPro" id="IPR001792">
    <property type="entry name" value="Acylphosphatase-like_dom"/>
</dbReference>
<dbReference type="InterPro" id="IPR036046">
    <property type="entry name" value="Acylphosphatase-like_dom_sf"/>
</dbReference>
<dbReference type="InterPro" id="IPR017968">
    <property type="entry name" value="Acylphosphatase_CS"/>
</dbReference>
<dbReference type="PANTHER" id="PTHR47268">
    <property type="entry name" value="ACYLPHOSPHATASE"/>
    <property type="match status" value="1"/>
</dbReference>
<dbReference type="PANTHER" id="PTHR47268:SF4">
    <property type="entry name" value="ACYLPHOSPHATASE"/>
    <property type="match status" value="1"/>
</dbReference>
<dbReference type="Pfam" id="PF00708">
    <property type="entry name" value="Acylphosphatase"/>
    <property type="match status" value="1"/>
</dbReference>
<dbReference type="PRINTS" id="PR00112">
    <property type="entry name" value="ACYLPHPHTASE"/>
</dbReference>
<dbReference type="SUPFAM" id="SSF54975">
    <property type="entry name" value="Acylphosphatase/BLUF domain-like"/>
    <property type="match status" value="1"/>
</dbReference>
<dbReference type="PROSITE" id="PS00150">
    <property type="entry name" value="ACYLPHOSPHATASE_1"/>
    <property type="match status" value="1"/>
</dbReference>
<dbReference type="PROSITE" id="PS00151">
    <property type="entry name" value="ACYLPHOSPHATASE_2"/>
    <property type="match status" value="1"/>
</dbReference>
<dbReference type="PROSITE" id="PS51160">
    <property type="entry name" value="ACYLPHOSPHATASE_3"/>
    <property type="match status" value="1"/>
</dbReference>
<comment type="catalytic activity">
    <reaction>
        <text>an acyl phosphate + H2O = a carboxylate + phosphate + H(+)</text>
        <dbReference type="Rhea" id="RHEA:14965"/>
        <dbReference type="ChEBI" id="CHEBI:15377"/>
        <dbReference type="ChEBI" id="CHEBI:15378"/>
        <dbReference type="ChEBI" id="CHEBI:29067"/>
        <dbReference type="ChEBI" id="CHEBI:43474"/>
        <dbReference type="ChEBI" id="CHEBI:59918"/>
        <dbReference type="EC" id="3.6.1.7"/>
    </reaction>
</comment>
<comment type="similarity">
    <text evidence="2">Belongs to the acylphosphatase family.</text>
</comment>